<organism>
    <name type="scientific">Candida albicans (strain SC5314 / ATCC MYA-2876)</name>
    <name type="common">Yeast</name>
    <dbReference type="NCBI Taxonomy" id="237561"/>
    <lineage>
        <taxon>Eukaryota</taxon>
        <taxon>Fungi</taxon>
        <taxon>Dikarya</taxon>
        <taxon>Ascomycota</taxon>
        <taxon>Saccharomycotina</taxon>
        <taxon>Pichiomycetes</taxon>
        <taxon>Debaryomycetaceae</taxon>
        <taxon>Candida/Lodderomyces clade</taxon>
        <taxon>Candida</taxon>
    </lineage>
</organism>
<reference key="1">
    <citation type="journal article" date="2004" name="Proc. Natl. Acad. Sci. U.S.A.">
        <title>The diploid genome sequence of Candida albicans.</title>
        <authorList>
            <person name="Jones T."/>
            <person name="Federspiel N.A."/>
            <person name="Chibana H."/>
            <person name="Dungan J."/>
            <person name="Kalman S."/>
            <person name="Magee B.B."/>
            <person name="Newport G."/>
            <person name="Thorstenson Y.R."/>
            <person name="Agabian N."/>
            <person name="Magee P.T."/>
            <person name="Davis R.W."/>
            <person name="Scherer S."/>
        </authorList>
    </citation>
    <scope>NUCLEOTIDE SEQUENCE [LARGE SCALE GENOMIC DNA]</scope>
    <source>
        <strain>SC5314 / ATCC MYA-2876</strain>
    </source>
</reference>
<reference key="2">
    <citation type="journal article" date="2007" name="Genome Biol.">
        <title>Assembly of the Candida albicans genome into sixteen supercontigs aligned on the eight chromosomes.</title>
        <authorList>
            <person name="van het Hoog M."/>
            <person name="Rast T.J."/>
            <person name="Martchenko M."/>
            <person name="Grindle S."/>
            <person name="Dignard D."/>
            <person name="Hogues H."/>
            <person name="Cuomo C."/>
            <person name="Berriman M."/>
            <person name="Scherer S."/>
            <person name="Magee B.B."/>
            <person name="Whiteway M."/>
            <person name="Chibana H."/>
            <person name="Nantel A."/>
            <person name="Magee P.T."/>
        </authorList>
    </citation>
    <scope>GENOME REANNOTATION</scope>
    <source>
        <strain>SC5314 / ATCC MYA-2876</strain>
    </source>
</reference>
<reference key="3">
    <citation type="journal article" date="2013" name="Genome Biol.">
        <title>Assembly of a phased diploid Candida albicans genome facilitates allele-specific measurements and provides a simple model for repeat and indel structure.</title>
        <authorList>
            <person name="Muzzey D."/>
            <person name="Schwartz K."/>
            <person name="Weissman J.S."/>
            <person name="Sherlock G."/>
        </authorList>
    </citation>
    <scope>NUCLEOTIDE SEQUENCE [LARGE SCALE GENOMIC DNA]</scope>
    <scope>GENOME REANNOTATION</scope>
    <source>
        <strain>SC5314 / ATCC MYA-2876</strain>
    </source>
</reference>
<reference key="4">
    <citation type="journal article" date="1992" name="Infect. Immun.">
        <title>Identification of Candida albicans antigens reactive with immunoglobulin E antibody of human sera.</title>
        <authorList>
            <person name="Ishiguro A."/>
            <person name="Homma M."/>
            <person name="Torii S."/>
            <person name="Tanaka K."/>
        </authorList>
    </citation>
    <scope>PROTEIN SEQUENCE OF 2-41</scope>
    <scope>SUBCELLULAR LOCATION</scope>
    <scope>ALLERGEN</scope>
    <source>
        <strain>C9</strain>
    </source>
</reference>
<reference key="5">
    <citation type="journal article" date="2001" name="Proteomics">
        <title>Analysis of the serologic response to systemic Candida albicans infection in a murine model.</title>
        <authorList>
            <person name="Pitarch A."/>
            <person name="Diez-Orejas R."/>
            <person name="Molero G."/>
            <person name="Pardo M."/>
            <person name="Sanchez M."/>
            <person name="Gil C."/>
            <person name="Nombela C."/>
        </authorList>
    </citation>
    <scope>PROTEIN SEQUENCE OF 2-21</scope>
    <source>
        <strain>SC5314 / ATCC MYA-2876</strain>
    </source>
</reference>
<evidence type="ECO:0000250" key="1"/>
<evidence type="ECO:0000269" key="2">
    <source>
    </source>
</evidence>
<evidence type="ECO:0000269" key="3">
    <source>
    </source>
</evidence>
<evidence type="ECO:0000305" key="4"/>
<evidence type="ECO:0007829" key="5">
    <source>
        <dbReference type="PDB" id="6LNK"/>
    </source>
</evidence>
<evidence type="ECO:0007829" key="6">
    <source>
        <dbReference type="PDB" id="7V6G"/>
    </source>
</evidence>
<feature type="initiator methionine" description="Removed" evidence="2 3">
    <location>
        <position position="1"/>
    </location>
</feature>
<feature type="chain" id="PRO_0000178757" description="Fructose-bisphosphate aldolase">
    <location>
        <begin position="2"/>
        <end position="359"/>
    </location>
</feature>
<feature type="active site" description="Proton donor" evidence="1">
    <location>
        <position position="109"/>
    </location>
</feature>
<feature type="binding site" evidence="1">
    <location>
        <position position="62"/>
    </location>
    <ligand>
        <name>D-glyceraldehyde 3-phosphate</name>
        <dbReference type="ChEBI" id="CHEBI:59776"/>
    </ligand>
</feature>
<feature type="binding site" evidence="1">
    <location>
        <position position="110"/>
    </location>
    <ligand>
        <name>Zn(2+)</name>
        <dbReference type="ChEBI" id="CHEBI:29105"/>
        <label>1</label>
        <note>catalytic</note>
    </ligand>
</feature>
<feature type="binding site" evidence="1">
    <location>
        <position position="144"/>
    </location>
    <ligand>
        <name>Zn(2+)</name>
        <dbReference type="ChEBI" id="CHEBI:29105"/>
        <label>2</label>
    </ligand>
</feature>
<feature type="binding site" evidence="1">
    <location>
        <position position="174"/>
    </location>
    <ligand>
        <name>Zn(2+)</name>
        <dbReference type="ChEBI" id="CHEBI:29105"/>
        <label>2</label>
    </ligand>
</feature>
<feature type="binding site" evidence="1">
    <location>
        <position position="226"/>
    </location>
    <ligand>
        <name>Zn(2+)</name>
        <dbReference type="ChEBI" id="CHEBI:29105"/>
        <label>1</label>
        <note>catalytic</note>
    </ligand>
</feature>
<feature type="binding site" evidence="1">
    <location>
        <position position="227"/>
    </location>
    <ligand>
        <name>dihydroxyacetone phosphate</name>
        <dbReference type="ChEBI" id="CHEBI:57642"/>
    </ligand>
</feature>
<feature type="binding site" evidence="1">
    <location>
        <position position="265"/>
    </location>
    <ligand>
        <name>Zn(2+)</name>
        <dbReference type="ChEBI" id="CHEBI:29105"/>
        <label>1</label>
        <note>catalytic</note>
    </ligand>
</feature>
<feature type="binding site" evidence="1">
    <location>
        <begin position="266"/>
        <end position="268"/>
    </location>
    <ligand>
        <name>dihydroxyacetone phosphate</name>
        <dbReference type="ChEBI" id="CHEBI:57642"/>
    </ligand>
</feature>
<feature type="binding site" evidence="1">
    <location>
        <begin position="287"/>
        <end position="290"/>
    </location>
    <ligand>
        <name>dihydroxyacetone phosphate</name>
        <dbReference type="ChEBI" id="CHEBI:57642"/>
    </ligand>
</feature>
<feature type="sequence conflict" description="In Ref. 4; AA sequence." evidence="4" ref="4">
    <original>K</original>
    <variation>L</variation>
    <location>
        <position position="16"/>
    </location>
</feature>
<feature type="sequence conflict" description="In Ref. 4; AA sequence." evidence="4" ref="4">
    <original>SSS</original>
    <variation>WSW</variation>
    <location>
        <begin position="39"/>
        <end position="41"/>
    </location>
</feature>
<feature type="helix" evidence="6">
    <location>
        <begin position="5"/>
        <end position="8"/>
    </location>
</feature>
<feature type="helix" evidence="6">
    <location>
        <begin position="16"/>
        <end position="28"/>
    </location>
</feature>
<feature type="strand" evidence="6">
    <location>
        <begin position="32"/>
        <end position="36"/>
    </location>
</feature>
<feature type="helix" evidence="6">
    <location>
        <begin position="40"/>
        <end position="52"/>
    </location>
</feature>
<feature type="strand" evidence="6">
    <location>
        <begin position="57"/>
        <end position="61"/>
    </location>
</feature>
<feature type="helix" evidence="6">
    <location>
        <begin position="63"/>
        <end position="70"/>
    </location>
</feature>
<feature type="helix" evidence="6">
    <location>
        <begin position="80"/>
        <end position="96"/>
    </location>
</feature>
<feature type="helix" evidence="6">
    <location>
        <begin position="97"/>
        <end position="100"/>
    </location>
</feature>
<feature type="strand" evidence="6">
    <location>
        <begin position="102"/>
        <end position="108"/>
    </location>
</feature>
<feature type="helix" evidence="6">
    <location>
        <begin position="113"/>
        <end position="115"/>
    </location>
</feature>
<feature type="helix" evidence="6">
    <location>
        <begin position="116"/>
        <end position="133"/>
    </location>
</feature>
<feature type="strand" evidence="6">
    <location>
        <begin position="137"/>
        <end position="143"/>
    </location>
</feature>
<feature type="helix" evidence="6">
    <location>
        <begin position="150"/>
        <end position="165"/>
    </location>
</feature>
<feature type="turn" evidence="6">
    <location>
        <begin position="166"/>
        <end position="168"/>
    </location>
</feature>
<feature type="strand" evidence="6">
    <location>
        <begin position="170"/>
        <end position="174"/>
    </location>
</feature>
<feature type="helix" evidence="6">
    <location>
        <begin position="199"/>
        <end position="212"/>
    </location>
</feature>
<feature type="strand" evidence="6">
    <location>
        <begin position="216"/>
        <end position="219"/>
    </location>
</feature>
<feature type="helix" evidence="6">
    <location>
        <begin position="238"/>
        <end position="252"/>
    </location>
</feature>
<feature type="strand" evidence="6">
    <location>
        <begin position="262"/>
        <end position="265"/>
    </location>
</feature>
<feature type="helix" evidence="6">
    <location>
        <begin position="272"/>
        <end position="280"/>
    </location>
</feature>
<feature type="strand" evidence="6">
    <location>
        <begin position="283"/>
        <end position="287"/>
    </location>
</feature>
<feature type="helix" evidence="6">
    <location>
        <begin position="289"/>
        <end position="302"/>
    </location>
</feature>
<feature type="turn" evidence="6">
    <location>
        <begin position="303"/>
        <end position="306"/>
    </location>
</feature>
<feature type="helix" evidence="6">
    <location>
        <begin position="307"/>
        <end position="309"/>
    </location>
</feature>
<feature type="strand" evidence="6">
    <location>
        <begin position="311"/>
        <end position="313"/>
    </location>
</feature>
<feature type="strand" evidence="6">
    <location>
        <begin position="316"/>
        <end position="318"/>
    </location>
</feature>
<feature type="turn" evidence="5">
    <location>
        <begin position="320"/>
        <end position="322"/>
    </location>
</feature>
<feature type="helix" evidence="6">
    <location>
        <begin position="326"/>
        <end position="329"/>
    </location>
</feature>
<feature type="helix" evidence="6">
    <location>
        <begin position="331"/>
        <end position="352"/>
    </location>
</feature>
<keyword id="KW-0002">3D-structure</keyword>
<keyword id="KW-0020">Allergen</keyword>
<keyword id="KW-0963">Cytoplasm</keyword>
<keyword id="KW-0903">Direct protein sequencing</keyword>
<keyword id="KW-0324">Glycolysis</keyword>
<keyword id="KW-0456">Lyase</keyword>
<keyword id="KW-0479">Metal-binding</keyword>
<keyword id="KW-1185">Reference proteome</keyword>
<keyword id="KW-0862">Zinc</keyword>
<gene>
    <name type="primary">FBA1</name>
    <name type="ordered locus">CAALFM_C401750CA</name>
    <name type="ORF">CaO19.12088</name>
    <name type="ORF">CaO19.4618</name>
</gene>
<proteinExistence type="evidence at protein level"/>
<comment type="function">
    <text evidence="1">Catalyzes the aldol condensation of dihydroxyacetone phosphate (DHAP or glycerone-phosphate) with glyceraldehyde 3-phosphate (G3P) to form fructose 1,6-bisphosphate (FBP) in gluconeogenesis and the reverse reaction in glycolysis.</text>
</comment>
<comment type="catalytic activity">
    <reaction>
        <text>beta-D-fructose 1,6-bisphosphate = D-glyceraldehyde 3-phosphate + dihydroxyacetone phosphate</text>
        <dbReference type="Rhea" id="RHEA:14729"/>
        <dbReference type="ChEBI" id="CHEBI:32966"/>
        <dbReference type="ChEBI" id="CHEBI:57642"/>
        <dbReference type="ChEBI" id="CHEBI:59776"/>
        <dbReference type="EC" id="4.1.2.13"/>
    </reaction>
</comment>
<comment type="cofactor">
    <cofactor evidence="1">
        <name>Zn(2+)</name>
        <dbReference type="ChEBI" id="CHEBI:29105"/>
    </cofactor>
    <text evidence="1">Binds 2 Zn(2+) ions per subunit. One is catalytic and the other provides a structural contribution.</text>
</comment>
<comment type="pathway">
    <text>Carbohydrate degradation; glycolysis; D-glyceraldehyde 3-phosphate and glycerone phosphate from D-glucose: step 4/4.</text>
</comment>
<comment type="subunit">
    <text evidence="1">Homodimer.</text>
</comment>
<comment type="subcellular location">
    <subcellularLocation>
        <location evidence="3">Cytoplasm</location>
    </subcellularLocation>
</comment>
<comment type="allergen">
    <text evidence="3">Causes an allergic reaction in human. Binds to IgE.</text>
</comment>
<comment type="similarity">
    <text evidence="4">Belongs to the class II fructose-bisphosphate aldolase family.</text>
</comment>
<protein>
    <recommendedName>
        <fullName>Fructose-bisphosphate aldolase</fullName>
        <shortName>FBP aldolase</shortName>
        <shortName>FBPA</shortName>
        <ecNumber>4.1.2.13</ecNumber>
    </recommendedName>
    <alternativeName>
        <fullName>37 kDa major allergen</fullName>
    </alternativeName>
    <alternativeName>
        <fullName>Fructose-1,6-bisphosphate aldolase</fullName>
    </alternativeName>
    <alternativeName>
        <fullName>IgE-binding allergen</fullName>
    </alternativeName>
</protein>
<accession>Q9URB4</accession>
<accession>A0A1D8PLC4</accession>
<accession>Q5AMM8</accession>
<sequence length="359" mass="39215">MAPPAVLSKSGVIYGKDVKDLFDYAQEKGFAIPAINVTSSSTVVAALEAARDNKAPIILQTSQGGAAYFAGKGVDNKDQAASIAGSIAAAHYIRAIAPTYGIPVVLHTDHCAKKLLPWFDGMLKADEEFFAKTGTPLFSSHMLDLSEETDDENIATCAKYFERMAKMGQWLEMEIGITGGEEDGVNNEHVEKDALYTSPETVFAVYESLHKISPNFSIAAAFGNVHGVYKPGNVQLRPEILGDHQVYAKKQIGTDAKHPLYLVFHGGSGSTQEEFNTAIKNGVVKVNLDTDCQYAYLTGIRDYVTNKIEYLKAPVGNPEGADKPNKKYFDPRVWVREGEKTMSKRIAEALDIFHTKGQL</sequence>
<name>ALF_CANAL</name>
<dbReference type="EC" id="4.1.2.13"/>
<dbReference type="EMBL" id="CP017626">
    <property type="protein sequence ID" value="AOW28947.1"/>
    <property type="molecule type" value="Genomic_DNA"/>
</dbReference>
<dbReference type="PIR" id="A43853">
    <property type="entry name" value="A43853"/>
</dbReference>
<dbReference type="RefSeq" id="XP_722690.1">
    <property type="nucleotide sequence ID" value="XM_717597.2"/>
</dbReference>
<dbReference type="PDB" id="6LNK">
    <property type="method" value="X-ray"/>
    <property type="resolution" value="2.64 A"/>
    <property type="chains" value="A/B=1-359"/>
</dbReference>
<dbReference type="PDB" id="7V6F">
    <property type="method" value="X-ray"/>
    <property type="resolution" value="2.98 A"/>
    <property type="chains" value="A/B=1-359"/>
</dbReference>
<dbReference type="PDB" id="7V6G">
    <property type="method" value="X-ray"/>
    <property type="resolution" value="2.34 A"/>
    <property type="chains" value="A/B=1-359"/>
</dbReference>
<dbReference type="PDB" id="7YVA">
    <property type="method" value="X-ray"/>
    <property type="resolution" value="2.93 A"/>
    <property type="chains" value="A/B=1-359"/>
</dbReference>
<dbReference type="PDBsum" id="6LNK"/>
<dbReference type="PDBsum" id="7V6F"/>
<dbReference type="PDBsum" id="7V6G"/>
<dbReference type="PDBsum" id="7YVA"/>
<dbReference type="SMR" id="Q9URB4"/>
<dbReference type="BioGRID" id="1218642">
    <property type="interactions" value="1"/>
</dbReference>
<dbReference type="FunCoup" id="Q9URB4">
    <property type="interactions" value="814"/>
</dbReference>
<dbReference type="STRING" id="237561.Q9URB4"/>
<dbReference type="BindingDB" id="Q9URB4"/>
<dbReference type="ChEMBL" id="CHEMBL1287619"/>
<dbReference type="Allergome" id="5990">
    <property type="allergen name" value="Cand a FPA"/>
</dbReference>
<dbReference type="MoonProt" id="Q9URB4"/>
<dbReference type="EnsemblFungi" id="C4_01750C_A-T">
    <property type="protein sequence ID" value="C4_01750C_A-T-p1"/>
    <property type="gene ID" value="C4_01750C_A"/>
</dbReference>
<dbReference type="GeneID" id="3635585"/>
<dbReference type="KEGG" id="cal:CAALFM_C401750CA"/>
<dbReference type="CGD" id="CAL0000186998">
    <property type="gene designation" value="FBA1"/>
</dbReference>
<dbReference type="VEuPathDB" id="FungiDB:C4_01750C_A"/>
<dbReference type="eggNOG" id="KOG4153">
    <property type="taxonomic scope" value="Eukaryota"/>
</dbReference>
<dbReference type="HOGENOM" id="CLU_036923_0_0_1"/>
<dbReference type="InParanoid" id="Q9URB4"/>
<dbReference type="OMA" id="PRTWGKL"/>
<dbReference type="OrthoDB" id="35652at2759"/>
<dbReference type="BRENDA" id="4.1.2.13">
    <property type="organism ID" value="1096"/>
</dbReference>
<dbReference type="UniPathway" id="UPA00109">
    <property type="reaction ID" value="UER00183"/>
</dbReference>
<dbReference type="PRO" id="PR:Q9URB4"/>
<dbReference type="Proteomes" id="UP000000559">
    <property type="component" value="Chromosome 4"/>
</dbReference>
<dbReference type="GO" id="GO:0009986">
    <property type="term" value="C:cell surface"/>
    <property type="evidence" value="ECO:0000314"/>
    <property type="project" value="CGD"/>
</dbReference>
<dbReference type="GO" id="GO:0005829">
    <property type="term" value="C:cytosol"/>
    <property type="evidence" value="ECO:0000318"/>
    <property type="project" value="GO_Central"/>
</dbReference>
<dbReference type="GO" id="GO:0009277">
    <property type="term" value="C:fungal-type cell wall"/>
    <property type="evidence" value="ECO:0000314"/>
    <property type="project" value="CGD"/>
</dbReference>
<dbReference type="GO" id="GO:0030446">
    <property type="term" value="C:hyphal cell wall"/>
    <property type="evidence" value="ECO:0000314"/>
    <property type="project" value="CGD"/>
</dbReference>
<dbReference type="GO" id="GO:0005886">
    <property type="term" value="C:plasma membrane"/>
    <property type="evidence" value="ECO:0000314"/>
    <property type="project" value="CGD"/>
</dbReference>
<dbReference type="GO" id="GO:0004332">
    <property type="term" value="F:fructose-bisphosphate aldolase activity"/>
    <property type="evidence" value="ECO:0000318"/>
    <property type="project" value="GO_Central"/>
</dbReference>
<dbReference type="GO" id="GO:0008270">
    <property type="term" value="F:zinc ion binding"/>
    <property type="evidence" value="ECO:0000318"/>
    <property type="project" value="GO_Central"/>
</dbReference>
<dbReference type="GO" id="GO:0051701">
    <property type="term" value="P:biological process involved in interaction with host"/>
    <property type="evidence" value="ECO:0000353"/>
    <property type="project" value="CGD"/>
</dbReference>
<dbReference type="GO" id="GO:0071466">
    <property type="term" value="P:cellular response to xenobiotic stimulus"/>
    <property type="evidence" value="ECO:0000315"/>
    <property type="project" value="CGD"/>
</dbReference>
<dbReference type="GO" id="GO:0006094">
    <property type="term" value="P:gluconeogenesis"/>
    <property type="evidence" value="ECO:0000318"/>
    <property type="project" value="GO_Central"/>
</dbReference>
<dbReference type="GO" id="GO:0006096">
    <property type="term" value="P:glycolytic process"/>
    <property type="evidence" value="ECO:0000318"/>
    <property type="project" value="GO_Central"/>
</dbReference>
<dbReference type="GO" id="GO:0052553">
    <property type="term" value="P:symbiont-mediated perturbation of host immune response"/>
    <property type="evidence" value="ECO:0000314"/>
    <property type="project" value="CGD"/>
</dbReference>
<dbReference type="CDD" id="cd00946">
    <property type="entry name" value="FBP_aldolase_IIA"/>
    <property type="match status" value="1"/>
</dbReference>
<dbReference type="FunFam" id="3.20.20.70:FF:000013">
    <property type="entry name" value="Class II fructose-bisphosphate aldolase"/>
    <property type="match status" value="1"/>
</dbReference>
<dbReference type="Gene3D" id="3.20.20.70">
    <property type="entry name" value="Aldolase class I"/>
    <property type="match status" value="1"/>
</dbReference>
<dbReference type="InterPro" id="IPR013785">
    <property type="entry name" value="Aldolase_TIM"/>
</dbReference>
<dbReference type="InterPro" id="IPR000771">
    <property type="entry name" value="FBA_II"/>
</dbReference>
<dbReference type="InterPro" id="IPR006411">
    <property type="entry name" value="Fruct_bisP_bact"/>
</dbReference>
<dbReference type="NCBIfam" id="TIGR00167">
    <property type="entry name" value="cbbA"/>
    <property type="match status" value="1"/>
</dbReference>
<dbReference type="NCBIfam" id="TIGR01520">
    <property type="entry name" value="FruBisAldo_II_A"/>
    <property type="match status" value="1"/>
</dbReference>
<dbReference type="NCBIfam" id="NF006628">
    <property type="entry name" value="PRK09197.1"/>
    <property type="match status" value="1"/>
</dbReference>
<dbReference type="PANTHER" id="PTHR30559:SF0">
    <property type="entry name" value="FRUCTOSE-BISPHOSPHATE ALDOLASE"/>
    <property type="match status" value="1"/>
</dbReference>
<dbReference type="PANTHER" id="PTHR30559">
    <property type="entry name" value="FRUCTOSE-BISPHOSPHATE ALDOLASE CLASS 2"/>
    <property type="match status" value="1"/>
</dbReference>
<dbReference type="Pfam" id="PF01116">
    <property type="entry name" value="F_bP_aldolase"/>
    <property type="match status" value="1"/>
</dbReference>
<dbReference type="PIRSF" id="PIRSF001359">
    <property type="entry name" value="F_bP_aldolase_II"/>
    <property type="match status" value="1"/>
</dbReference>
<dbReference type="SUPFAM" id="SSF51569">
    <property type="entry name" value="Aldolase"/>
    <property type="match status" value="1"/>
</dbReference>
<dbReference type="PROSITE" id="PS00602">
    <property type="entry name" value="ALDOLASE_CLASS_II_1"/>
    <property type="match status" value="1"/>
</dbReference>
<dbReference type="PROSITE" id="PS00806">
    <property type="entry name" value="ALDOLASE_CLASS_II_2"/>
    <property type="match status" value="1"/>
</dbReference>